<protein>
    <recommendedName>
        <fullName>Em-like protein GEA1</fullName>
        <shortName>EM1</shortName>
    </recommendedName>
</protein>
<feature type="chain" id="PRO_0000185676" description="Em-like protein GEA1">
    <location>
        <begin position="1"/>
        <end position="152"/>
    </location>
</feature>
<feature type="repeat" description="1">
    <location>
        <begin position="44"/>
        <end position="63"/>
    </location>
</feature>
<feature type="repeat" description="2">
    <location>
        <begin position="64"/>
        <end position="83"/>
    </location>
</feature>
<feature type="repeat" description="3">
    <location>
        <begin position="84"/>
        <end position="103"/>
    </location>
</feature>
<feature type="repeat" description="4">
    <location>
        <begin position="104"/>
        <end position="123"/>
    </location>
</feature>
<feature type="region of interest" description="Disordered" evidence="1">
    <location>
        <begin position="1"/>
        <end position="63"/>
    </location>
</feature>
<feature type="region of interest" description="4 X 20 AA tandem repeats">
    <location>
        <begin position="44"/>
        <end position="123"/>
    </location>
</feature>
<feature type="region of interest" description="Disordered" evidence="1">
    <location>
        <begin position="116"/>
        <end position="152"/>
    </location>
</feature>
<feature type="compositionally biased region" description="Basic and acidic residues" evidence="1">
    <location>
        <begin position="1"/>
        <end position="17"/>
    </location>
</feature>
<feature type="compositionally biased region" description="Basic and acidic residues" evidence="1">
    <location>
        <begin position="32"/>
        <end position="63"/>
    </location>
</feature>
<proteinExistence type="evidence at transcript level"/>
<keyword id="KW-1185">Reference proteome</keyword>
<keyword id="KW-0677">Repeat</keyword>
<reference key="1">
    <citation type="journal article" date="1993" name="Mol. Gen. Genet.">
        <title>Two different Em-like genes are expressed in Arabidopsis thaliana seeds during maturation.</title>
        <authorList>
            <person name="Gaubier P."/>
            <person name="Raynal M."/>
            <person name="Hull G."/>
            <person name="Huestis G.M."/>
            <person name="Grellet F."/>
            <person name="Arenas C."/>
            <person name="Pages M."/>
            <person name="Delseny M."/>
        </authorList>
    </citation>
    <scope>NUCLEOTIDE SEQUENCE [GENOMIC DNA]</scope>
    <source>
        <strain>cv. Columbia</strain>
    </source>
</reference>
<reference key="2">
    <citation type="journal article" date="1999" name="Plant Mol. Biol.">
        <title>Fine sequence analysis of 60 kb around the Arabidopsis thaliana AtEm1 locus on chromosome III.</title>
        <authorList>
            <person name="Comella P."/>
            <person name="Wu H.-J."/>
            <person name="Laudie M."/>
            <person name="Berger C."/>
            <person name="Cooke R."/>
            <person name="Delseny M."/>
            <person name="Grellet F."/>
        </authorList>
    </citation>
    <scope>NUCLEOTIDE SEQUENCE [LARGE SCALE GENOMIC DNA]</scope>
    <source>
        <strain>cv. Columbia</strain>
    </source>
</reference>
<reference key="3">
    <citation type="journal article" date="2017" name="Plant J.">
        <title>Araport11: a complete reannotation of the Arabidopsis thaliana reference genome.</title>
        <authorList>
            <person name="Cheng C.Y."/>
            <person name="Krishnakumar V."/>
            <person name="Chan A.P."/>
            <person name="Thibaud-Nissen F."/>
            <person name="Schobel S."/>
            <person name="Town C.D."/>
        </authorList>
    </citation>
    <scope>GENOME REANNOTATION</scope>
    <source>
        <strain>cv. Columbia</strain>
    </source>
</reference>
<reference key="4">
    <citation type="journal article" date="2003" name="Science">
        <title>Empirical analysis of transcriptional activity in the Arabidopsis genome.</title>
        <authorList>
            <person name="Yamada K."/>
            <person name="Lim J."/>
            <person name="Dale J.M."/>
            <person name="Chen H."/>
            <person name="Shinn P."/>
            <person name="Palm C.J."/>
            <person name="Southwick A.M."/>
            <person name="Wu H.C."/>
            <person name="Kim C.J."/>
            <person name="Nguyen M."/>
            <person name="Pham P.K."/>
            <person name="Cheuk R.F."/>
            <person name="Karlin-Newmann G."/>
            <person name="Liu S.X."/>
            <person name="Lam B."/>
            <person name="Sakano H."/>
            <person name="Wu T."/>
            <person name="Yu G."/>
            <person name="Miranda M."/>
            <person name="Quach H.L."/>
            <person name="Tripp M."/>
            <person name="Chang C.H."/>
            <person name="Lee J.M."/>
            <person name="Toriumi M.J."/>
            <person name="Chan M.M."/>
            <person name="Tang C.C."/>
            <person name="Onodera C.S."/>
            <person name="Deng J.M."/>
            <person name="Akiyama K."/>
            <person name="Ansari Y."/>
            <person name="Arakawa T."/>
            <person name="Banh J."/>
            <person name="Banno F."/>
            <person name="Bowser L."/>
            <person name="Brooks S.Y."/>
            <person name="Carninci P."/>
            <person name="Chao Q."/>
            <person name="Choy N."/>
            <person name="Enju A."/>
            <person name="Goldsmith A.D."/>
            <person name="Gurjal M."/>
            <person name="Hansen N.F."/>
            <person name="Hayashizaki Y."/>
            <person name="Johnson-Hopson C."/>
            <person name="Hsuan V.W."/>
            <person name="Iida K."/>
            <person name="Karnes M."/>
            <person name="Khan S."/>
            <person name="Koesema E."/>
            <person name="Ishida J."/>
            <person name="Jiang P.X."/>
            <person name="Jones T."/>
            <person name="Kawai J."/>
            <person name="Kamiya A."/>
            <person name="Meyers C."/>
            <person name="Nakajima M."/>
            <person name="Narusaka M."/>
            <person name="Seki M."/>
            <person name="Sakurai T."/>
            <person name="Satou M."/>
            <person name="Tamse R."/>
            <person name="Vaysberg M."/>
            <person name="Wallender E.K."/>
            <person name="Wong C."/>
            <person name="Yamamura Y."/>
            <person name="Yuan S."/>
            <person name="Shinozaki K."/>
            <person name="Davis R.W."/>
            <person name="Theologis A."/>
            <person name="Ecker J.R."/>
        </authorList>
    </citation>
    <scope>NUCLEOTIDE SEQUENCE [LARGE SCALE MRNA]</scope>
    <source>
        <strain>cv. Columbia</strain>
    </source>
</reference>
<organism>
    <name type="scientific">Arabidopsis thaliana</name>
    <name type="common">Mouse-ear cress</name>
    <dbReference type="NCBI Taxonomy" id="3702"/>
    <lineage>
        <taxon>Eukaryota</taxon>
        <taxon>Viridiplantae</taxon>
        <taxon>Streptophyta</taxon>
        <taxon>Embryophyta</taxon>
        <taxon>Tracheophyta</taxon>
        <taxon>Spermatophyta</taxon>
        <taxon>Magnoliopsida</taxon>
        <taxon>eudicotyledons</taxon>
        <taxon>Gunneridae</taxon>
        <taxon>Pentapetalae</taxon>
        <taxon>rosids</taxon>
        <taxon>malvids</taxon>
        <taxon>Brassicales</taxon>
        <taxon>Brassicaceae</taxon>
        <taxon>Camelineae</taxon>
        <taxon>Arabidopsis</taxon>
    </lineage>
</organism>
<dbReference type="EMBL" id="Z11158">
    <property type="protein sequence ID" value="CAA77509.1"/>
    <property type="molecule type" value="Genomic_DNA"/>
</dbReference>
<dbReference type="EMBL" id="Z11921">
    <property type="protein sequence ID" value="CAA77979.1"/>
    <property type="molecule type" value="Genomic_DNA"/>
</dbReference>
<dbReference type="EMBL" id="AF049236">
    <property type="protein sequence ID" value="AAC14408.1"/>
    <property type="molecule type" value="Genomic_DNA"/>
</dbReference>
<dbReference type="EMBL" id="CP002686">
    <property type="protein sequence ID" value="AEE78847.1"/>
    <property type="molecule type" value="Genomic_DNA"/>
</dbReference>
<dbReference type="EMBL" id="BT004105">
    <property type="protein sequence ID" value="AAO42128.1"/>
    <property type="molecule type" value="mRNA"/>
</dbReference>
<dbReference type="EMBL" id="BT005464">
    <property type="protein sequence ID" value="AAO63884.1"/>
    <property type="molecule type" value="mRNA"/>
</dbReference>
<dbReference type="PIR" id="S34819">
    <property type="entry name" value="S34819"/>
</dbReference>
<dbReference type="RefSeq" id="NP_190749.1">
    <property type="nucleotide sequence ID" value="NM_115040.3"/>
</dbReference>
<dbReference type="BioGRID" id="9662">
    <property type="interactions" value="1"/>
</dbReference>
<dbReference type="STRING" id="3702.Q07187"/>
<dbReference type="PaxDb" id="3702-AT3G51810.1"/>
<dbReference type="ProteomicsDB" id="222321"/>
<dbReference type="EnsemblPlants" id="AT3G51810.1">
    <property type="protein sequence ID" value="AT3G51810.1"/>
    <property type="gene ID" value="AT3G51810"/>
</dbReference>
<dbReference type="GeneID" id="824344"/>
<dbReference type="Gramene" id="AT3G51810.1">
    <property type="protein sequence ID" value="AT3G51810.1"/>
    <property type="gene ID" value="AT3G51810"/>
</dbReference>
<dbReference type="KEGG" id="ath:AT3G51810"/>
<dbReference type="Araport" id="AT3G51810"/>
<dbReference type="TAIR" id="AT3G51810">
    <property type="gene designation" value="EM1"/>
</dbReference>
<dbReference type="eggNOG" id="ENOG502S1DH">
    <property type="taxonomic scope" value="Eukaryota"/>
</dbReference>
<dbReference type="HOGENOM" id="CLU_144393_0_0_1"/>
<dbReference type="InParanoid" id="Q07187"/>
<dbReference type="PhylomeDB" id="Q07187"/>
<dbReference type="PRO" id="PR:Q07187"/>
<dbReference type="Proteomes" id="UP000006548">
    <property type="component" value="Chromosome 3"/>
</dbReference>
<dbReference type="ExpressionAtlas" id="Q07187">
    <property type="expression patterns" value="baseline and differential"/>
</dbReference>
<dbReference type="GO" id="GO:0005829">
    <property type="term" value="C:cytosol"/>
    <property type="evidence" value="ECO:0007005"/>
    <property type="project" value="TAIR"/>
</dbReference>
<dbReference type="GO" id="GO:0009737">
    <property type="term" value="P:response to abscisic acid"/>
    <property type="evidence" value="ECO:0000304"/>
    <property type="project" value="TAIR"/>
</dbReference>
<dbReference type="InterPro" id="IPR038956">
    <property type="entry name" value="LEA_5"/>
</dbReference>
<dbReference type="InterPro" id="IPR022377">
    <property type="entry name" value="Sm_Hydphi_plant_seed_CS"/>
</dbReference>
<dbReference type="InterPro" id="IPR000389">
    <property type="entry name" value="Small_hydrophilic_seed_prot"/>
</dbReference>
<dbReference type="PANTHER" id="PTHR34671">
    <property type="entry name" value="EM-LIKE PROTEIN GEA1"/>
    <property type="match status" value="1"/>
</dbReference>
<dbReference type="PANTHER" id="PTHR34671:SF11">
    <property type="entry name" value="EM-LIKE PROTEIN GEA1"/>
    <property type="match status" value="1"/>
</dbReference>
<dbReference type="Pfam" id="PF00477">
    <property type="entry name" value="LEA_5"/>
    <property type="match status" value="1"/>
</dbReference>
<dbReference type="PROSITE" id="PS00431">
    <property type="entry name" value="SMALL_HYDR_PLANT_SEED"/>
    <property type="match status" value="1"/>
</dbReference>
<evidence type="ECO:0000256" key="1">
    <source>
        <dbReference type="SAM" id="MobiDB-lite"/>
    </source>
</evidence>
<evidence type="ECO:0000305" key="2"/>
<name>EM1_ARATH</name>
<comment type="function">
    <text>It is thought to provide protection for the cytoplasm during the desiccation stage of embryo development.</text>
</comment>
<comment type="tissue specificity">
    <text>In seeds only. Specifically located to vascular bundles in the cotyledon and axis of the dry seed. Also found in the epiderm and outer layers of the cortex in the embryo axis.</text>
</comment>
<comment type="developmental stage">
    <text>First appears in immature seeds and is maximally expressed in dry seeds.</text>
</comment>
<comment type="induction">
    <text>By abscisic acid (ABA).</text>
</comment>
<comment type="similarity">
    <text evidence="2">Belongs to the small hydrophilic plant seed protein family.</text>
</comment>
<gene>
    <name type="primary">EM1</name>
    <name type="ordered locus">At3g51810</name>
    <name type="ORF">ATEM1.6</name>
</gene>
<sequence>MASKQLSREELDEKAKQGETVVPGGTGGHSLEAQEHLAEGRSKGGQTRKEQLGHEGYQEIGHKGGEARKEQLGHEGYQEMGHKGGEARKEQLGHEGYQEMGHKGGEARKEQLGHEGYKEMGRKGGLSTMEKSGGERAEEEGIEIDESKFTNK</sequence>
<accession>Q07187</accession>